<name>SUFS_SHISS</name>
<proteinExistence type="inferred from homology"/>
<evidence type="ECO:0000255" key="1">
    <source>
        <dbReference type="HAMAP-Rule" id="MF_01831"/>
    </source>
</evidence>
<feature type="chain" id="PRO_1000070431" description="Cysteine desulfurase">
    <location>
        <begin position="1"/>
        <end position="406"/>
    </location>
</feature>
<feature type="active site" description="Cysteine persulfide intermediate" evidence="1">
    <location>
        <position position="364"/>
    </location>
</feature>
<feature type="modified residue" description="N6-(pyridoxal phosphate)lysine" evidence="1">
    <location>
        <position position="226"/>
    </location>
</feature>
<accession>Q3Z233</accession>
<sequence>MTFSVDKVRADFPVLSREVNGLPLAYLDSAASAQKPSQVIDAEAEFYRHGYAAVHRGIHTLSAQATEKMENVRKRASLFINARSAEELVFVRGTTEGINLVANSWGNSNVRAGDNIIISQMEHHANIVPWQMLCARVGAELRVIPLNPDGTLQLETLPTLFDEKTRLLAITHVSNVLGTENPLAEIITLAHQHGAKVLVDGAQAVMHHPVDVQALDCDFYVFSGHKLYGPTGIGILYVKEALLQEMPPWEGGGSMIATVSLSEGTTWTKAPWRFEAGTPNTGGIIGLGAALEYVSALGLNNIAEYEQNLMHYALSQLESVPDLTLYGPQNRLGVIAFNLGKHHAYDVGSFLDNYGIAVRTGHHCAMPLMAYYNVPAMCRASLAMYNTHEEVDRLVTGLQRIHRLLG</sequence>
<reference key="1">
    <citation type="journal article" date="2005" name="Nucleic Acids Res.">
        <title>Genome dynamics and diversity of Shigella species, the etiologic agents of bacillary dysentery.</title>
        <authorList>
            <person name="Yang F."/>
            <person name="Yang J."/>
            <person name="Zhang X."/>
            <person name="Chen L."/>
            <person name="Jiang Y."/>
            <person name="Yan Y."/>
            <person name="Tang X."/>
            <person name="Wang J."/>
            <person name="Xiong Z."/>
            <person name="Dong J."/>
            <person name="Xue Y."/>
            <person name="Zhu Y."/>
            <person name="Xu X."/>
            <person name="Sun L."/>
            <person name="Chen S."/>
            <person name="Nie H."/>
            <person name="Peng J."/>
            <person name="Xu J."/>
            <person name="Wang Y."/>
            <person name="Yuan Z."/>
            <person name="Wen Y."/>
            <person name="Yao Z."/>
            <person name="Shen Y."/>
            <person name="Qiang B."/>
            <person name="Hou Y."/>
            <person name="Yu J."/>
            <person name="Jin Q."/>
        </authorList>
    </citation>
    <scope>NUCLEOTIDE SEQUENCE [LARGE SCALE GENOMIC DNA]</scope>
    <source>
        <strain>Ss046</strain>
    </source>
</reference>
<organism>
    <name type="scientific">Shigella sonnei (strain Ss046)</name>
    <dbReference type="NCBI Taxonomy" id="300269"/>
    <lineage>
        <taxon>Bacteria</taxon>
        <taxon>Pseudomonadati</taxon>
        <taxon>Pseudomonadota</taxon>
        <taxon>Gammaproteobacteria</taxon>
        <taxon>Enterobacterales</taxon>
        <taxon>Enterobacteriaceae</taxon>
        <taxon>Shigella</taxon>
    </lineage>
</organism>
<dbReference type="EC" id="2.8.1.7" evidence="1"/>
<dbReference type="EC" id="4.4.1.16" evidence="1"/>
<dbReference type="EMBL" id="CP000038">
    <property type="protein sequence ID" value="AAZ88179.1"/>
    <property type="molecule type" value="Genomic_DNA"/>
</dbReference>
<dbReference type="RefSeq" id="WP_000144563.1">
    <property type="nucleotide sequence ID" value="NC_007384.1"/>
</dbReference>
<dbReference type="SMR" id="Q3Z233"/>
<dbReference type="GeneID" id="93775835"/>
<dbReference type="KEGG" id="ssn:SSON_1476"/>
<dbReference type="HOGENOM" id="CLU_003433_2_5_6"/>
<dbReference type="UniPathway" id="UPA00266"/>
<dbReference type="Proteomes" id="UP000002529">
    <property type="component" value="Chromosome"/>
</dbReference>
<dbReference type="GO" id="GO:0005737">
    <property type="term" value="C:cytoplasm"/>
    <property type="evidence" value="ECO:0007669"/>
    <property type="project" value="UniProtKB-SubCell"/>
</dbReference>
<dbReference type="GO" id="GO:0031071">
    <property type="term" value="F:cysteine desulfurase activity"/>
    <property type="evidence" value="ECO:0007669"/>
    <property type="project" value="UniProtKB-UniRule"/>
</dbReference>
<dbReference type="GO" id="GO:0030170">
    <property type="term" value="F:pyridoxal phosphate binding"/>
    <property type="evidence" value="ECO:0007669"/>
    <property type="project" value="InterPro"/>
</dbReference>
<dbReference type="GO" id="GO:0009000">
    <property type="term" value="F:selenocysteine lyase activity"/>
    <property type="evidence" value="ECO:0007669"/>
    <property type="project" value="UniProtKB-UniRule"/>
</dbReference>
<dbReference type="GO" id="GO:0006534">
    <property type="term" value="P:cysteine metabolic process"/>
    <property type="evidence" value="ECO:0007669"/>
    <property type="project" value="InterPro"/>
</dbReference>
<dbReference type="CDD" id="cd06453">
    <property type="entry name" value="SufS_like"/>
    <property type="match status" value="1"/>
</dbReference>
<dbReference type="FunFam" id="3.40.640.10:FF:000042">
    <property type="entry name" value="Cysteine desulfurase"/>
    <property type="match status" value="1"/>
</dbReference>
<dbReference type="Gene3D" id="3.90.1150.10">
    <property type="entry name" value="Aspartate Aminotransferase, domain 1"/>
    <property type="match status" value="1"/>
</dbReference>
<dbReference type="Gene3D" id="3.40.640.10">
    <property type="entry name" value="Type I PLP-dependent aspartate aminotransferase-like (Major domain)"/>
    <property type="match status" value="1"/>
</dbReference>
<dbReference type="HAMAP" id="MF_01831">
    <property type="entry name" value="SufS_aminotrans_5"/>
    <property type="match status" value="1"/>
</dbReference>
<dbReference type="InterPro" id="IPR000192">
    <property type="entry name" value="Aminotrans_V_dom"/>
</dbReference>
<dbReference type="InterPro" id="IPR020578">
    <property type="entry name" value="Aminotrans_V_PyrdxlP_BS"/>
</dbReference>
<dbReference type="InterPro" id="IPR010970">
    <property type="entry name" value="Cys_dSase_SufS"/>
</dbReference>
<dbReference type="InterPro" id="IPR015424">
    <property type="entry name" value="PyrdxlP-dep_Trfase"/>
</dbReference>
<dbReference type="InterPro" id="IPR015421">
    <property type="entry name" value="PyrdxlP-dep_Trfase_major"/>
</dbReference>
<dbReference type="InterPro" id="IPR015422">
    <property type="entry name" value="PyrdxlP-dep_Trfase_small"/>
</dbReference>
<dbReference type="NCBIfam" id="NF006791">
    <property type="entry name" value="PRK09295.1"/>
    <property type="match status" value="1"/>
</dbReference>
<dbReference type="NCBIfam" id="TIGR01979">
    <property type="entry name" value="sufS"/>
    <property type="match status" value="1"/>
</dbReference>
<dbReference type="PANTHER" id="PTHR43586">
    <property type="entry name" value="CYSTEINE DESULFURASE"/>
    <property type="match status" value="1"/>
</dbReference>
<dbReference type="PANTHER" id="PTHR43586:SF25">
    <property type="entry name" value="CYSTEINE DESULFURASE"/>
    <property type="match status" value="1"/>
</dbReference>
<dbReference type="Pfam" id="PF00266">
    <property type="entry name" value="Aminotran_5"/>
    <property type="match status" value="1"/>
</dbReference>
<dbReference type="SUPFAM" id="SSF53383">
    <property type="entry name" value="PLP-dependent transferases"/>
    <property type="match status" value="1"/>
</dbReference>
<dbReference type="PROSITE" id="PS00595">
    <property type="entry name" value="AA_TRANSFER_CLASS_5"/>
    <property type="match status" value="1"/>
</dbReference>
<comment type="function">
    <text evidence="1">Cysteine desulfurases mobilize the sulfur from L-cysteine to yield L-alanine, an essential step in sulfur metabolism for biosynthesis of a variety of sulfur-containing biomolecules. Component of the suf operon, which is activated and required under specific conditions such as oxidative stress and iron limitation. Acts as a potent selenocysteine lyase in vitro, that mobilizes selenium from L-selenocysteine. Selenocysteine lyase activity is however unsure in vivo.</text>
</comment>
<comment type="catalytic activity">
    <reaction evidence="1">
        <text>(sulfur carrier)-H + L-cysteine = (sulfur carrier)-SH + L-alanine</text>
        <dbReference type="Rhea" id="RHEA:43892"/>
        <dbReference type="Rhea" id="RHEA-COMP:14737"/>
        <dbReference type="Rhea" id="RHEA-COMP:14739"/>
        <dbReference type="ChEBI" id="CHEBI:29917"/>
        <dbReference type="ChEBI" id="CHEBI:35235"/>
        <dbReference type="ChEBI" id="CHEBI:57972"/>
        <dbReference type="ChEBI" id="CHEBI:64428"/>
        <dbReference type="EC" id="2.8.1.7"/>
    </reaction>
</comment>
<comment type="catalytic activity">
    <reaction evidence="1">
        <text>L-selenocysteine + AH2 = hydrogenselenide + L-alanine + A + H(+)</text>
        <dbReference type="Rhea" id="RHEA:11632"/>
        <dbReference type="ChEBI" id="CHEBI:13193"/>
        <dbReference type="ChEBI" id="CHEBI:15378"/>
        <dbReference type="ChEBI" id="CHEBI:17499"/>
        <dbReference type="ChEBI" id="CHEBI:29317"/>
        <dbReference type="ChEBI" id="CHEBI:57843"/>
        <dbReference type="ChEBI" id="CHEBI:57972"/>
        <dbReference type="EC" id="4.4.1.16"/>
    </reaction>
</comment>
<comment type="cofactor">
    <cofactor evidence="1">
        <name>pyridoxal 5'-phosphate</name>
        <dbReference type="ChEBI" id="CHEBI:597326"/>
    </cofactor>
</comment>
<comment type="pathway">
    <text evidence="1">Cofactor biosynthesis; iron-sulfur cluster biosynthesis.</text>
</comment>
<comment type="subunit">
    <text evidence="1">Homodimer. Interacts with SufE and the SufBCD complex composed of SufB, SufC and SufD. The interaction with SufE is required to mediate the direct transfer of the sulfur atom from the S-sulfanylcysteine.</text>
</comment>
<comment type="subcellular location">
    <subcellularLocation>
        <location evidence="1">Cytoplasm</location>
    </subcellularLocation>
</comment>
<comment type="similarity">
    <text evidence="1">Belongs to the class-V pyridoxal-phosphate-dependent aminotransferase family. Csd subfamily.</text>
</comment>
<gene>
    <name evidence="1" type="primary">sufS</name>
    <name type="ordered locus">SSON_1476</name>
</gene>
<keyword id="KW-0963">Cytoplasm</keyword>
<keyword id="KW-0456">Lyase</keyword>
<keyword id="KW-0663">Pyridoxal phosphate</keyword>
<keyword id="KW-1185">Reference proteome</keyword>
<keyword id="KW-0808">Transferase</keyword>
<protein>
    <recommendedName>
        <fullName evidence="1">Cysteine desulfurase</fullName>
        <ecNumber evidence="1">2.8.1.7</ecNumber>
    </recommendedName>
    <alternativeName>
        <fullName evidence="1">Selenocysteine beta-lyase</fullName>
        <shortName evidence="1">SCL</shortName>
    </alternativeName>
    <alternativeName>
        <fullName evidence="1">Selenocysteine lyase</fullName>
        <ecNumber evidence="1">4.4.1.16</ecNumber>
    </alternativeName>
    <alternativeName>
        <fullName evidence="1">Selenocysteine reductase</fullName>
    </alternativeName>
</protein>